<keyword id="KW-0472">Membrane</keyword>
<keyword id="KW-1185">Reference proteome</keyword>
<keyword id="KW-0812">Transmembrane</keyword>
<keyword id="KW-1133">Transmembrane helix</keyword>
<comment type="function">
    <text evidence="1">May play a role in bone development.</text>
</comment>
<comment type="subcellular location">
    <subcellularLocation>
        <location evidence="4">Membrane</location>
        <topology evidence="2">Multi-pass membrane protein</topology>
    </subcellularLocation>
</comment>
<comment type="similarity">
    <text evidence="4">Belongs to the TMEM263 family.</text>
</comment>
<accession>Q7T352</accession>
<dbReference type="EMBL" id="AY398380">
    <property type="protein sequence ID" value="AAQ97813.1"/>
    <property type="molecule type" value="mRNA"/>
</dbReference>
<dbReference type="EMBL" id="BX248320">
    <property type="protein sequence ID" value="CAM12993.1"/>
    <property type="molecule type" value="Genomic_DNA"/>
</dbReference>
<dbReference type="EMBL" id="BX571971">
    <property type="protein sequence ID" value="CAK10702.1"/>
    <property type="molecule type" value="Genomic_DNA"/>
</dbReference>
<dbReference type="EMBL" id="BC053251">
    <property type="protein sequence ID" value="AAH53251.1"/>
    <property type="molecule type" value="mRNA"/>
</dbReference>
<dbReference type="RefSeq" id="NP_998306.1">
    <property type="nucleotide sequence ID" value="NM_213141.1"/>
</dbReference>
<dbReference type="FunCoup" id="Q7T352">
    <property type="interactions" value="1380"/>
</dbReference>
<dbReference type="STRING" id="7955.ENSDARP00000048205"/>
<dbReference type="PaxDb" id="7955-ENSDARP00000048205"/>
<dbReference type="Ensembl" id="ENSDART00000048206">
    <property type="protein sequence ID" value="ENSDARP00000048205"/>
    <property type="gene ID" value="ENSDARG00000030465"/>
</dbReference>
<dbReference type="Ensembl" id="ENSDART00000181728">
    <property type="protein sequence ID" value="ENSDARP00000150426"/>
    <property type="gene ID" value="ENSDARG00000113008"/>
</dbReference>
<dbReference type="GeneID" id="406415"/>
<dbReference type="KEGG" id="dre:406415"/>
<dbReference type="AGR" id="ZFIN:ZDB-GENE-040426-2155"/>
<dbReference type="CTD" id="90488"/>
<dbReference type="ZFIN" id="ZDB-GENE-040426-2155">
    <property type="gene designation" value="tmem263"/>
</dbReference>
<dbReference type="eggNOG" id="ENOG502S1YC">
    <property type="taxonomic scope" value="Eukaryota"/>
</dbReference>
<dbReference type="HOGENOM" id="CLU_131259_1_0_1"/>
<dbReference type="InParanoid" id="Q7T352"/>
<dbReference type="OMA" id="NNKDHPE"/>
<dbReference type="OrthoDB" id="6140834at2759"/>
<dbReference type="PhylomeDB" id="Q7T352"/>
<dbReference type="TreeFam" id="TF333298"/>
<dbReference type="PRO" id="PR:Q7T352"/>
<dbReference type="Proteomes" id="UP000000437">
    <property type="component" value="Alternate scaffold 18"/>
</dbReference>
<dbReference type="Proteomes" id="UP000000437">
    <property type="component" value="Chromosome 18"/>
</dbReference>
<dbReference type="Bgee" id="ENSDARG00000030465">
    <property type="expression patterns" value="Expressed in tail bud paraxial mesoderm and 26 other cell types or tissues"/>
</dbReference>
<dbReference type="GO" id="GO:0016020">
    <property type="term" value="C:membrane"/>
    <property type="evidence" value="ECO:0007669"/>
    <property type="project" value="UniProtKB-SubCell"/>
</dbReference>
<dbReference type="InterPro" id="IPR028153">
    <property type="entry name" value="UPF0444"/>
</dbReference>
<dbReference type="PANTHER" id="PTHR31443">
    <property type="match status" value="1"/>
</dbReference>
<dbReference type="Pfam" id="PF15475">
    <property type="entry name" value="UPF0444"/>
    <property type="match status" value="1"/>
</dbReference>
<reference key="1">
    <citation type="journal article" date="2004" name="Proc. Natl. Acad. Sci. U.S.A.">
        <title>Hematopoietic gene expression profile in zebrafish kidney marrow.</title>
        <authorList>
            <person name="Song H.-D."/>
            <person name="Sun X.-J."/>
            <person name="Deng M."/>
            <person name="Zhang G.-W."/>
            <person name="Zhou Y."/>
            <person name="Wu X.-Y."/>
            <person name="Sheng Y."/>
            <person name="Chen Y."/>
            <person name="Ruan Z."/>
            <person name="Jiang C.-L."/>
            <person name="Fan H.-Y."/>
            <person name="Zon L.I."/>
            <person name="Kanki J.P."/>
            <person name="Liu T.X."/>
            <person name="Look A.T."/>
            <person name="Chen Z."/>
        </authorList>
    </citation>
    <scope>NUCLEOTIDE SEQUENCE [LARGE SCALE MRNA]</scope>
    <source>
        <tissue>Kidney marrow</tissue>
    </source>
</reference>
<reference key="2">
    <citation type="journal article" date="2013" name="Nature">
        <title>The zebrafish reference genome sequence and its relationship to the human genome.</title>
        <authorList>
            <person name="Howe K."/>
            <person name="Clark M.D."/>
            <person name="Torroja C.F."/>
            <person name="Torrance J."/>
            <person name="Berthelot C."/>
            <person name="Muffato M."/>
            <person name="Collins J.E."/>
            <person name="Humphray S."/>
            <person name="McLaren K."/>
            <person name="Matthews L."/>
            <person name="McLaren S."/>
            <person name="Sealy I."/>
            <person name="Caccamo M."/>
            <person name="Churcher C."/>
            <person name="Scott C."/>
            <person name="Barrett J.C."/>
            <person name="Koch R."/>
            <person name="Rauch G.J."/>
            <person name="White S."/>
            <person name="Chow W."/>
            <person name="Kilian B."/>
            <person name="Quintais L.T."/>
            <person name="Guerra-Assuncao J.A."/>
            <person name="Zhou Y."/>
            <person name="Gu Y."/>
            <person name="Yen J."/>
            <person name="Vogel J.H."/>
            <person name="Eyre T."/>
            <person name="Redmond S."/>
            <person name="Banerjee R."/>
            <person name="Chi J."/>
            <person name="Fu B."/>
            <person name="Langley E."/>
            <person name="Maguire S.F."/>
            <person name="Laird G.K."/>
            <person name="Lloyd D."/>
            <person name="Kenyon E."/>
            <person name="Donaldson S."/>
            <person name="Sehra H."/>
            <person name="Almeida-King J."/>
            <person name="Loveland J."/>
            <person name="Trevanion S."/>
            <person name="Jones M."/>
            <person name="Quail M."/>
            <person name="Willey D."/>
            <person name="Hunt A."/>
            <person name="Burton J."/>
            <person name="Sims S."/>
            <person name="McLay K."/>
            <person name="Plumb B."/>
            <person name="Davis J."/>
            <person name="Clee C."/>
            <person name="Oliver K."/>
            <person name="Clark R."/>
            <person name="Riddle C."/>
            <person name="Elliot D."/>
            <person name="Threadgold G."/>
            <person name="Harden G."/>
            <person name="Ware D."/>
            <person name="Begum S."/>
            <person name="Mortimore B."/>
            <person name="Kerry G."/>
            <person name="Heath P."/>
            <person name="Phillimore B."/>
            <person name="Tracey A."/>
            <person name="Corby N."/>
            <person name="Dunn M."/>
            <person name="Johnson C."/>
            <person name="Wood J."/>
            <person name="Clark S."/>
            <person name="Pelan S."/>
            <person name="Griffiths G."/>
            <person name="Smith M."/>
            <person name="Glithero R."/>
            <person name="Howden P."/>
            <person name="Barker N."/>
            <person name="Lloyd C."/>
            <person name="Stevens C."/>
            <person name="Harley J."/>
            <person name="Holt K."/>
            <person name="Panagiotidis G."/>
            <person name="Lovell J."/>
            <person name="Beasley H."/>
            <person name="Henderson C."/>
            <person name="Gordon D."/>
            <person name="Auger K."/>
            <person name="Wright D."/>
            <person name="Collins J."/>
            <person name="Raisen C."/>
            <person name="Dyer L."/>
            <person name="Leung K."/>
            <person name="Robertson L."/>
            <person name="Ambridge K."/>
            <person name="Leongamornlert D."/>
            <person name="McGuire S."/>
            <person name="Gilderthorp R."/>
            <person name="Griffiths C."/>
            <person name="Manthravadi D."/>
            <person name="Nichol S."/>
            <person name="Barker G."/>
            <person name="Whitehead S."/>
            <person name="Kay M."/>
            <person name="Brown J."/>
            <person name="Murnane C."/>
            <person name="Gray E."/>
            <person name="Humphries M."/>
            <person name="Sycamore N."/>
            <person name="Barker D."/>
            <person name="Saunders D."/>
            <person name="Wallis J."/>
            <person name="Babbage A."/>
            <person name="Hammond S."/>
            <person name="Mashreghi-Mohammadi M."/>
            <person name="Barr L."/>
            <person name="Martin S."/>
            <person name="Wray P."/>
            <person name="Ellington A."/>
            <person name="Matthews N."/>
            <person name="Ellwood M."/>
            <person name="Woodmansey R."/>
            <person name="Clark G."/>
            <person name="Cooper J."/>
            <person name="Tromans A."/>
            <person name="Grafham D."/>
            <person name="Skuce C."/>
            <person name="Pandian R."/>
            <person name="Andrews R."/>
            <person name="Harrison E."/>
            <person name="Kimberley A."/>
            <person name="Garnett J."/>
            <person name="Fosker N."/>
            <person name="Hall R."/>
            <person name="Garner P."/>
            <person name="Kelly D."/>
            <person name="Bird C."/>
            <person name="Palmer S."/>
            <person name="Gehring I."/>
            <person name="Berger A."/>
            <person name="Dooley C.M."/>
            <person name="Ersan-Urun Z."/>
            <person name="Eser C."/>
            <person name="Geiger H."/>
            <person name="Geisler M."/>
            <person name="Karotki L."/>
            <person name="Kirn A."/>
            <person name="Konantz J."/>
            <person name="Konantz M."/>
            <person name="Oberlander M."/>
            <person name="Rudolph-Geiger S."/>
            <person name="Teucke M."/>
            <person name="Lanz C."/>
            <person name="Raddatz G."/>
            <person name="Osoegawa K."/>
            <person name="Zhu B."/>
            <person name="Rapp A."/>
            <person name="Widaa S."/>
            <person name="Langford C."/>
            <person name="Yang F."/>
            <person name="Schuster S.C."/>
            <person name="Carter N.P."/>
            <person name="Harrow J."/>
            <person name="Ning Z."/>
            <person name="Herrero J."/>
            <person name="Searle S.M."/>
            <person name="Enright A."/>
            <person name="Geisler R."/>
            <person name="Plasterk R.H."/>
            <person name="Lee C."/>
            <person name="Westerfield M."/>
            <person name="de Jong P.J."/>
            <person name="Zon L.I."/>
            <person name="Postlethwait J.H."/>
            <person name="Nusslein-Volhard C."/>
            <person name="Hubbard T.J."/>
            <person name="Roest Crollius H."/>
            <person name="Rogers J."/>
            <person name="Stemple D.L."/>
        </authorList>
    </citation>
    <scope>NUCLEOTIDE SEQUENCE [LARGE SCALE GENOMIC DNA]</scope>
    <source>
        <strain>Tuebingen</strain>
    </source>
</reference>
<reference key="3">
    <citation type="submission" date="2003-06" db="EMBL/GenBank/DDBJ databases">
        <authorList>
            <consortium name="NIH - Zebrafish Gene Collection (ZGC) project"/>
        </authorList>
    </citation>
    <scope>NUCLEOTIDE SEQUENCE [LARGE SCALE MRNA]</scope>
    <source>
        <tissue>Kidney</tissue>
    </source>
</reference>
<protein>
    <recommendedName>
        <fullName>Transmembrane protein 263</fullName>
    </recommendedName>
</protein>
<gene>
    <name type="primary">tmem263</name>
    <name type="ORF">si:dkey-227k11.2</name>
    <name type="ORF">zgc:64098</name>
</gene>
<sequence>MSETNQQRDDLPAYLNDEPPADANKDHPQPQPGMFSRVAGGLFSVTKGAVGATVGGVAWVGGKSFDLTKTAVTSVASVPAMGVGLVKGGVSAVAGGVTAVGSAVVSKVPIGGGKKKDKSD</sequence>
<evidence type="ECO:0000250" key="1">
    <source>
        <dbReference type="UniProtKB" id="Q8WUH6"/>
    </source>
</evidence>
<evidence type="ECO:0000255" key="2"/>
<evidence type="ECO:0000256" key="3">
    <source>
        <dbReference type="SAM" id="MobiDB-lite"/>
    </source>
</evidence>
<evidence type="ECO:0000305" key="4"/>
<proteinExistence type="evidence at transcript level"/>
<feature type="chain" id="PRO_0000293703" description="Transmembrane protein 263">
    <location>
        <begin position="1"/>
        <end position="120"/>
    </location>
</feature>
<feature type="transmembrane region" description="Helical" evidence="2">
    <location>
        <begin position="40"/>
        <end position="60"/>
    </location>
</feature>
<feature type="transmembrane region" description="Helical" evidence="2">
    <location>
        <begin position="80"/>
        <end position="100"/>
    </location>
</feature>
<feature type="region of interest" description="Disordered" evidence="3">
    <location>
        <begin position="1"/>
        <end position="36"/>
    </location>
</feature>
<feature type="compositionally biased region" description="Basic and acidic residues" evidence="3">
    <location>
        <begin position="1"/>
        <end position="11"/>
    </location>
</feature>
<name>TM263_DANRE</name>
<organism>
    <name type="scientific">Danio rerio</name>
    <name type="common">Zebrafish</name>
    <name type="synonym">Brachydanio rerio</name>
    <dbReference type="NCBI Taxonomy" id="7955"/>
    <lineage>
        <taxon>Eukaryota</taxon>
        <taxon>Metazoa</taxon>
        <taxon>Chordata</taxon>
        <taxon>Craniata</taxon>
        <taxon>Vertebrata</taxon>
        <taxon>Euteleostomi</taxon>
        <taxon>Actinopterygii</taxon>
        <taxon>Neopterygii</taxon>
        <taxon>Teleostei</taxon>
        <taxon>Ostariophysi</taxon>
        <taxon>Cypriniformes</taxon>
        <taxon>Danionidae</taxon>
        <taxon>Danioninae</taxon>
        <taxon>Danio</taxon>
    </lineage>
</organism>